<comment type="function">
    <text evidence="3">Involved in the uptake of p-toluenesulphonate (TSA). Forms a large, general diffusion pore with a preference for anions.</text>
</comment>
<comment type="subunit">
    <text evidence="4">Part of a two-component transport system composed of TsaT and TsaS.</text>
</comment>
<comment type="subcellular location">
    <subcellularLocation>
        <location evidence="3">Cell outer membrane</location>
    </subcellularLocation>
</comment>
<comment type="induction">
    <text evidence="2 3">Induced by TSA. Transcriptionally regulated by TsaQ and TsaR.</text>
</comment>
<accession>Q8KR68</accession>
<keyword id="KW-0998">Cell outer membrane</keyword>
<keyword id="KW-0903">Direct protein sequencing</keyword>
<keyword id="KW-0406">Ion transport</keyword>
<keyword id="KW-0472">Membrane</keyword>
<keyword id="KW-0614">Plasmid</keyword>
<keyword id="KW-0626">Porin</keyword>
<keyword id="KW-0732">Signal</keyword>
<keyword id="KW-0812">Transmembrane</keyword>
<keyword id="KW-0813">Transport</keyword>
<gene>
    <name type="primary">tsaT</name>
</gene>
<sequence length="338" mass="36535">MNFRRRLCTAALIAALPLASQAQNNTLLLNSVLAPQNPMTKMIVKPWAEKIAQVTEGRVKVDVAPSSLAAPQQQLASVNKGVFDIAYQFHGLLTDQVKLNQIAQLPFVNTTARGSSVALWRTYQKHFAKANELGEVQVLALFVQPPGVMFGMKGPIDGMDKLKGRKVYALPGVPSAMMESAGAAVVAAPGARSYEIVSGKTVDAFVGYPTSDAEGLKTLSYATDVTDIPGNLTAVSWVLFMNKKRWAALSEKDRKAIESISGEAFAQGMKQYDDLETKVRSEAAAKGIKFHMANDAFVKELQTLATPITQAWLKDASSRGVNGQEALDFYRAQAAANR</sequence>
<geneLocation type="plasmid">
    <name>pTSA</name>
</geneLocation>
<feature type="signal peptide" evidence="1">
    <location>
        <begin position="1"/>
        <end position="22"/>
    </location>
</feature>
<feature type="chain" id="PRO_0000430299" description="Outer membrane transporter protein TsaT">
    <location>
        <begin position="23"/>
        <end position="338"/>
    </location>
</feature>
<proteinExistence type="evidence at protein level"/>
<name>TSAT_COMTE</name>
<reference key="1">
    <citation type="journal article" date="2001" name="Appl. Environ. Microbiol.">
        <title>Map of the IncP1beta plasmid pTSA encoding the widespread genes (tsa) for p-toluenesulfonate degradation in Comamonas testosteroni T-2.</title>
        <authorList>
            <person name="Tralau T."/>
            <person name="Cook A.M."/>
            <person name="Ruff J."/>
        </authorList>
    </citation>
    <scope>NUCLEOTIDE SEQUENCE [GENOMIC DNA]</scope>
    <source>
        <strain>DSM 6577 / T-2</strain>
    </source>
</reference>
<reference key="2">
    <citation type="journal article" date="2004" name="Biochem. J.">
        <title>A novel outer-membrane anion channel (porin) as part of a putatively two-component transport system for 4-toluenesulphonate in Comamonas testosteroni T-2.</title>
        <authorList>
            <person name="Mampel J."/>
            <person name="Maier E."/>
            <person name="Tralau T."/>
            <person name="Ruff J."/>
            <person name="Benz R."/>
            <person name="Cook A.M."/>
        </authorList>
    </citation>
    <scope>NUCLEOTIDE SEQUENCE [GENOMIC DNA]</scope>
    <scope>PROTEIN SEQUENCE OF 23-29</scope>
    <scope>FUNCTION</scope>
    <scope>SUBUNIT</scope>
    <scope>SUBCELLULAR LOCATION</scope>
    <scope>INDUCTION</scope>
    <source>
        <strain>DSM 6577 / T-2</strain>
    </source>
</reference>
<reference key="3">
    <citation type="journal article" date="2003" name="Arch. Microbiol.">
        <title>An additional regulator, TsaQ, is involved with TsaR in regulation of transport during the degradation of p-toluenesulfonate in Comamonas testosteroni T-2.</title>
        <authorList>
            <person name="Tralau T."/>
            <person name="Cook A.M."/>
            <person name="Ruff J."/>
        </authorList>
    </citation>
    <scope>INDUCTION</scope>
    <source>
        <strain>DSM 6577 / T-2</strain>
    </source>
</reference>
<evidence type="ECO:0000255" key="1"/>
<evidence type="ECO:0000269" key="2">
    <source>
    </source>
</evidence>
<evidence type="ECO:0000269" key="3">
    <source>
    </source>
</evidence>
<evidence type="ECO:0000305" key="4">
    <source>
    </source>
</evidence>
<protein>
    <recommendedName>
        <fullName>Outer membrane transporter protein TsaT</fullName>
    </recommendedName>
</protein>
<organism>
    <name type="scientific">Comamonas testosteroni</name>
    <name type="common">Pseudomonas testosteroni</name>
    <dbReference type="NCBI Taxonomy" id="285"/>
    <lineage>
        <taxon>Bacteria</taxon>
        <taxon>Pseudomonadati</taxon>
        <taxon>Pseudomonadota</taxon>
        <taxon>Betaproteobacteria</taxon>
        <taxon>Burkholderiales</taxon>
        <taxon>Comamonadaceae</taxon>
        <taxon>Comamonas</taxon>
    </lineage>
</organism>
<dbReference type="EMBL" id="AH010657">
    <property type="protein sequence ID" value="AAL02394.2"/>
    <property type="molecule type" value="Genomic_DNA"/>
</dbReference>
<dbReference type="SMR" id="Q8KR68"/>
<dbReference type="TCDB" id="2.A.56.1.19">
    <property type="family name" value="the tripartite atp-independent periplasmic transporter (trap-t) family"/>
</dbReference>
<dbReference type="GO" id="GO:0009279">
    <property type="term" value="C:cell outer membrane"/>
    <property type="evidence" value="ECO:0007669"/>
    <property type="project" value="UniProtKB-SubCell"/>
</dbReference>
<dbReference type="GO" id="GO:0046930">
    <property type="term" value="C:pore complex"/>
    <property type="evidence" value="ECO:0007669"/>
    <property type="project" value="UniProtKB-KW"/>
</dbReference>
<dbReference type="GO" id="GO:0015288">
    <property type="term" value="F:porin activity"/>
    <property type="evidence" value="ECO:0007669"/>
    <property type="project" value="UniProtKB-KW"/>
</dbReference>
<dbReference type="GO" id="GO:0006811">
    <property type="term" value="P:monoatomic ion transport"/>
    <property type="evidence" value="ECO:0007669"/>
    <property type="project" value="UniProtKB-KW"/>
</dbReference>
<dbReference type="CDD" id="cd13601">
    <property type="entry name" value="PBP2_TRAP_DctP1_3_4_like"/>
    <property type="match status" value="1"/>
</dbReference>
<dbReference type="Gene3D" id="3.40.190.170">
    <property type="entry name" value="Bacterial extracellular solute-binding protein, family 7"/>
    <property type="match status" value="1"/>
</dbReference>
<dbReference type="InterPro" id="IPR018389">
    <property type="entry name" value="DctP_fam"/>
</dbReference>
<dbReference type="InterPro" id="IPR038404">
    <property type="entry name" value="TRAP_DctP_sf"/>
</dbReference>
<dbReference type="NCBIfam" id="NF037995">
    <property type="entry name" value="TRAP_S1"/>
    <property type="match status" value="1"/>
</dbReference>
<dbReference type="PANTHER" id="PTHR33376">
    <property type="match status" value="1"/>
</dbReference>
<dbReference type="PANTHER" id="PTHR33376:SF15">
    <property type="entry name" value="BLL6794 PROTEIN"/>
    <property type="match status" value="1"/>
</dbReference>
<dbReference type="Pfam" id="PF03480">
    <property type="entry name" value="DctP"/>
    <property type="match status" value="1"/>
</dbReference>